<keyword id="KW-0150">Chloroplast</keyword>
<keyword id="KW-0472">Membrane</keyword>
<keyword id="KW-0934">Plastid</keyword>
<keyword id="KW-1001">Plastid inner membrane</keyword>
<keyword id="KW-0653">Protein transport</keyword>
<keyword id="KW-1185">Reference proteome</keyword>
<keyword id="KW-0812">Transmembrane</keyword>
<keyword id="KW-1133">Transmembrane helix</keyword>
<keyword id="KW-0813">Transport</keyword>
<reference key="1">
    <citation type="journal article" date="2005" name="Plant Mol. Biol.">
        <title>Complete chloroplast genome sequence of Glycine max and comparative analyses with other legume genomes.</title>
        <authorList>
            <person name="Saski C."/>
            <person name="Lee S.-B."/>
            <person name="Daniell H."/>
            <person name="Wood T.C."/>
            <person name="Tomkins J."/>
            <person name="Kim H.-G."/>
            <person name="Jansen R.K."/>
        </authorList>
    </citation>
    <scope>NUCLEOTIDE SEQUENCE [LARGE SCALE GENOMIC DNA]</scope>
    <source>
        <strain>cv. PI 437654</strain>
    </source>
</reference>
<name>TI214_SOYBN</name>
<gene>
    <name evidence="1" type="primary">TIC214</name>
    <name type="synonym">ycf1-A</name>
</gene>
<gene>
    <name evidence="1" type="primary">TIC214</name>
    <name type="synonym">ycf1-B</name>
</gene>
<accession>Q2PMP0</accession>
<accession>Q2PMM8</accession>
<protein>
    <recommendedName>
        <fullName evidence="1">Protein TIC 214</fullName>
    </recommendedName>
    <alternativeName>
        <fullName evidence="1">Translocon at the inner envelope membrane of chloroplasts 214</fullName>
        <shortName evidence="1">AtTIC214</shortName>
    </alternativeName>
</protein>
<proteinExistence type="inferred from homology"/>
<organism>
    <name type="scientific">Glycine max</name>
    <name type="common">Soybean</name>
    <name type="synonym">Glycine hispida</name>
    <dbReference type="NCBI Taxonomy" id="3847"/>
    <lineage>
        <taxon>Eukaryota</taxon>
        <taxon>Viridiplantae</taxon>
        <taxon>Streptophyta</taxon>
        <taxon>Embryophyta</taxon>
        <taxon>Tracheophyta</taxon>
        <taxon>Spermatophyta</taxon>
        <taxon>Magnoliopsida</taxon>
        <taxon>eudicotyledons</taxon>
        <taxon>Gunneridae</taxon>
        <taxon>Pentapetalae</taxon>
        <taxon>rosids</taxon>
        <taxon>fabids</taxon>
        <taxon>Fabales</taxon>
        <taxon>Fabaceae</taxon>
        <taxon>Papilionoideae</taxon>
        <taxon>50 kb inversion clade</taxon>
        <taxon>NPAAA clade</taxon>
        <taxon>indigoferoid/millettioid clade</taxon>
        <taxon>Phaseoleae</taxon>
        <taxon>Glycine</taxon>
        <taxon>Glycine subgen. Soja</taxon>
    </lineage>
</organism>
<geneLocation type="chloroplast"/>
<feature type="chain" id="PRO_0000262632" description="Protein TIC 214">
    <location>
        <begin position="1"/>
        <end position="1792"/>
    </location>
</feature>
<feature type="transmembrane region" description="Helical" evidence="2">
    <location>
        <begin position="18"/>
        <end position="38"/>
    </location>
</feature>
<feature type="transmembrane region" description="Helical" evidence="2">
    <location>
        <begin position="64"/>
        <end position="84"/>
    </location>
</feature>
<feature type="transmembrane region" description="Helical" evidence="2">
    <location>
        <begin position="87"/>
        <end position="107"/>
    </location>
</feature>
<feature type="transmembrane region" description="Helical" evidence="2">
    <location>
        <begin position="129"/>
        <end position="149"/>
    </location>
</feature>
<feature type="transmembrane region" description="Helical" evidence="2">
    <location>
        <begin position="165"/>
        <end position="185"/>
    </location>
</feature>
<feature type="transmembrane region" description="Helical" evidence="2">
    <location>
        <begin position="221"/>
        <end position="241"/>
    </location>
</feature>
<feature type="sequence conflict" description="In Ref. 1; ABC25181." evidence="3" ref="1">
    <original>CNN</original>
    <variation>FKY</variation>
    <location>
        <begin position="160"/>
        <end position="162"/>
    </location>
</feature>
<sequence length="1792" mass="215930">MIFQSFILDNLVFLCMKIINSIVVVGLYYGFLTTFSIGPSYLFLLRARLVEEGTEKKISATTGFITGQLIMFISIYYAPLHLALGRPHIITVIALPYLLFQFFGNNHKNFLNYGYKNPNSIRNFSIQRIFFHNLIFQLLNPFFLPSSILIRLVNIYLFRCNNKFIFLISSFIGWIIGHTFFMKWIEFILVRIQQTNSIKSNVRIQSNKYIMSEFRNSMLKIFLVFLFITCLYYLGRVPPPFFSKKLSEIQETHEIYKKGKKIDVEKNLQRVQTKQKQKRSNNKEGFLSLFSKNENNLYKIDEEKYKLGFVKKPLVNILFNYKRWNRPFRYIKNNRFENVVKNEISEFFFHTCQSDGKERISFMYPPNLSTFHKMMETKFYLFTKDKISYDELSNYWSYTNEEKRNKLSNEFVNRAKVMDKELISLDILENRIRLSNDETKTKYLTKIYDPFLNGRFRGQIENVFSTSIQYEKNEKKNTILINKIHGILISNNTYKKNNSNYPELEKKINIFDRKSLVTTFFFFNLISKFSKKLVSSLSFETLSLFPEHEQVKINYEEEKKQIIKILFDAIRTDLNEKTIVNGNRTKCIRINEIRKKVPRWSYKFIDELEQLEGKNEAENYQIRSRKAKRVVILTNKSKFFKKYDTYNPTGDTDNAEKKKNELALIRYSQQSDFRRDIIKGSIRAQRRKTVTWKFFQKRVHSPLFLDKIEKPLFFSFDSFKSMKIFFMFKIWMRKKEEFEISSYTEERAKESSKKEEEKKKENEERKRIEIAEAWDSIIFAQVIRGILLITQSILRKYILLPSLIITKNIARILFFQFPEWSEDFRDWKREMYIKCTYNGVQLSEREFPKKWLTDGIQIKILFPFRLKPWHKSKLRSNEKKKDLMKKKNFCFLTVWGMEVDLPFSGSPQKNRFSSFFDPIFKELKKKTKQFQFFTFRVLKVLSEKLKLFLTILIEKAKRISKSIIESILKSILKSILSLTKIKQFFKLLFIKFKFKKIDELSENKKDSTIYKNNPMISETTISIQSINSVNCSLKKKKIKDLNAKRKAVIKKIEKIKKGLVISETNIHSNKTTYDSKRVEFEKKKLQILQRRRNARLTRKSHSFFKFFMKRIYRDIFLYISCIPRINIQLFLELTKKFLNKSIYDNEANAERIYKTNQSIIRFISILHKYFHTRNPNSHNSCDISFLSQAYVFFNLLHTRIININIYKLRSVFQYHGIFFFLKNEIKDSFFGAQGIFHYKLKHNNPLNSVRNQWTNWLKDHYYQYDLSKSRWSRLVPQKWRNRITEYRIAQNKDLTKCNSYEKSQLILYKEQQVNALKKKIRKQYRYDLLSYNFINYADKKDSYIYGYRSLFQVKKNQVISSNYNTYKKELFDIIDNLFIKNYISEDAILDMEKNLYRKYFDWMGINREILNRSISNPEFWFFSKFVIFYDAYRGNSQVIPIKLLFFSSNVNQNVSENKKNITRKKKNESLELELETRNRAKAEYPDQRNLESSISNQEKDIENDYVGSDSEKNSKGIKKKKDKNKMEAELNFLLRNFLILHLNWNNFLGQRIFNNVKVYCLLIRLKNLREITIASIQRGELGLDIMMIQNQKNLILLGLRKKKNNKFMKKEIFVIEPVRLSRKNNKQFFMYQTIGLSLIQKNKRKIYHKYPEKIHVNKKNFYKYITRTRDQKITEKKEKDNSDLLVPENILSARRRRELRILICLNPNNINSMHRNTIFYNPNKVQNGFPLLTKKRKYFEKDKKKLMNFKIFLWPKYRLEDLACINRYWFNTHNGSRFSIVRIHMYPRMKIR</sequence>
<dbReference type="EMBL" id="DQ317523">
    <property type="protein sequence ID" value="ABC25169.1"/>
    <property type="molecule type" value="Genomic_DNA"/>
</dbReference>
<dbReference type="EMBL" id="DQ317523">
    <property type="protein sequence ID" value="ABC25181.1"/>
    <property type="molecule type" value="Genomic_DNA"/>
</dbReference>
<dbReference type="STRING" id="3847.Q2PMP0"/>
<dbReference type="PaxDb" id="3847-GLYMA16G07071.1"/>
<dbReference type="KEGG" id="gmx:3989353"/>
<dbReference type="KEGG" id="gmx:3989366"/>
<dbReference type="eggNOG" id="ENOG502QSDY">
    <property type="taxonomic scope" value="Eukaryota"/>
</dbReference>
<dbReference type="InParanoid" id="Q2PMP0"/>
<dbReference type="Proteomes" id="UP000008827">
    <property type="component" value="Chloroplast"/>
</dbReference>
<dbReference type="GO" id="GO:0009706">
    <property type="term" value="C:chloroplast inner membrane"/>
    <property type="evidence" value="ECO:0007669"/>
    <property type="project" value="UniProtKB-SubCell"/>
</dbReference>
<dbReference type="GO" id="GO:0015031">
    <property type="term" value="P:protein transport"/>
    <property type="evidence" value="ECO:0007669"/>
    <property type="project" value="UniProtKB-KW"/>
</dbReference>
<dbReference type="InterPro" id="IPR008896">
    <property type="entry name" value="TIC214"/>
</dbReference>
<dbReference type="PANTHER" id="PTHR33163:SF40">
    <property type="entry name" value="PROTEIN TIC 214"/>
    <property type="match status" value="1"/>
</dbReference>
<dbReference type="PANTHER" id="PTHR33163">
    <property type="entry name" value="PROTEIN TIC 214-RELATED"/>
    <property type="match status" value="1"/>
</dbReference>
<dbReference type="Pfam" id="PF05758">
    <property type="entry name" value="Ycf1"/>
    <property type="match status" value="2"/>
</dbReference>
<comment type="function">
    <text evidence="1">Involved in protein precursor import into chloroplasts. May be part of an intermediate translocation complex acting as a protein-conducting channel at the inner envelope.</text>
</comment>
<comment type="subunit">
    <text evidence="1">Part of the Tic complex.</text>
</comment>
<comment type="subcellular location">
    <subcellularLocation>
        <location evidence="1">Plastid</location>
        <location evidence="1">Chloroplast inner membrane</location>
        <topology evidence="2">Multi-pass membrane protein</topology>
    </subcellularLocation>
</comment>
<comment type="miscellaneous">
    <text>There is a partial copy of the N-terminus (positions 1-162) of ycf1 in the inverted repeat (ABC25181).</text>
</comment>
<comment type="similarity">
    <text evidence="3">Belongs to the TIC214 family.</text>
</comment>
<evidence type="ECO:0000250" key="1">
    <source>
        <dbReference type="UniProtKB" id="P56785"/>
    </source>
</evidence>
<evidence type="ECO:0000255" key="2"/>
<evidence type="ECO:0000305" key="3"/>